<gene>
    <name evidence="1" type="primary">ackA</name>
    <name type="ordered locus">ETA_11940</name>
</gene>
<proteinExistence type="inferred from homology"/>
<keyword id="KW-0067">ATP-binding</keyword>
<keyword id="KW-0963">Cytoplasm</keyword>
<keyword id="KW-0418">Kinase</keyword>
<keyword id="KW-0460">Magnesium</keyword>
<keyword id="KW-0479">Metal-binding</keyword>
<keyword id="KW-0547">Nucleotide-binding</keyword>
<keyword id="KW-1185">Reference proteome</keyword>
<keyword id="KW-0808">Transferase</keyword>
<feature type="chain" id="PRO_1000089972" description="Acetate kinase">
    <location>
        <begin position="1"/>
        <end position="400"/>
    </location>
</feature>
<feature type="active site" description="Proton donor/acceptor" evidence="1">
    <location>
        <position position="150"/>
    </location>
</feature>
<feature type="binding site" evidence="1">
    <location>
        <position position="10"/>
    </location>
    <ligand>
        <name>Mg(2+)</name>
        <dbReference type="ChEBI" id="CHEBI:18420"/>
    </ligand>
</feature>
<feature type="binding site" evidence="1">
    <location>
        <position position="17"/>
    </location>
    <ligand>
        <name>ATP</name>
        <dbReference type="ChEBI" id="CHEBI:30616"/>
    </ligand>
</feature>
<feature type="binding site" evidence="1">
    <location>
        <position position="91"/>
    </location>
    <ligand>
        <name>substrate</name>
    </ligand>
</feature>
<feature type="binding site" evidence="1">
    <location>
        <begin position="210"/>
        <end position="214"/>
    </location>
    <ligand>
        <name>ATP</name>
        <dbReference type="ChEBI" id="CHEBI:30616"/>
    </ligand>
</feature>
<feature type="binding site" evidence="1">
    <location>
        <begin position="285"/>
        <end position="287"/>
    </location>
    <ligand>
        <name>ATP</name>
        <dbReference type="ChEBI" id="CHEBI:30616"/>
    </ligand>
</feature>
<feature type="binding site" evidence="1">
    <location>
        <begin position="333"/>
        <end position="337"/>
    </location>
    <ligand>
        <name>ATP</name>
        <dbReference type="ChEBI" id="CHEBI:30616"/>
    </ligand>
</feature>
<feature type="binding site" evidence="1">
    <location>
        <position position="387"/>
    </location>
    <ligand>
        <name>Mg(2+)</name>
        <dbReference type="ChEBI" id="CHEBI:18420"/>
    </ligand>
</feature>
<feature type="site" description="Transition state stabilizer" evidence="1">
    <location>
        <position position="182"/>
    </location>
</feature>
<feature type="site" description="Transition state stabilizer" evidence="1">
    <location>
        <position position="243"/>
    </location>
</feature>
<organism>
    <name type="scientific">Erwinia tasmaniensis (strain DSM 17950 / CFBP 7177 / CIP 109463 / NCPPB 4357 / Et1/99)</name>
    <dbReference type="NCBI Taxonomy" id="465817"/>
    <lineage>
        <taxon>Bacteria</taxon>
        <taxon>Pseudomonadati</taxon>
        <taxon>Pseudomonadota</taxon>
        <taxon>Gammaproteobacteria</taxon>
        <taxon>Enterobacterales</taxon>
        <taxon>Erwiniaceae</taxon>
        <taxon>Erwinia</taxon>
    </lineage>
</organism>
<evidence type="ECO:0000255" key="1">
    <source>
        <dbReference type="HAMAP-Rule" id="MF_00020"/>
    </source>
</evidence>
<comment type="function">
    <text evidence="1">Catalyzes the formation of acetyl phosphate from acetate and ATP. Can also catalyze the reverse reaction.</text>
</comment>
<comment type="catalytic activity">
    <reaction evidence="1">
        <text>acetate + ATP = acetyl phosphate + ADP</text>
        <dbReference type="Rhea" id="RHEA:11352"/>
        <dbReference type="ChEBI" id="CHEBI:22191"/>
        <dbReference type="ChEBI" id="CHEBI:30089"/>
        <dbReference type="ChEBI" id="CHEBI:30616"/>
        <dbReference type="ChEBI" id="CHEBI:456216"/>
        <dbReference type="EC" id="2.7.2.1"/>
    </reaction>
</comment>
<comment type="cofactor">
    <cofactor evidence="1">
        <name>Mg(2+)</name>
        <dbReference type="ChEBI" id="CHEBI:18420"/>
    </cofactor>
    <cofactor evidence="1">
        <name>Mn(2+)</name>
        <dbReference type="ChEBI" id="CHEBI:29035"/>
    </cofactor>
    <text evidence="1">Mg(2+). Can also accept Mn(2+).</text>
</comment>
<comment type="pathway">
    <text evidence="1">Metabolic intermediate biosynthesis; acetyl-CoA biosynthesis; acetyl-CoA from acetate: step 1/2.</text>
</comment>
<comment type="subunit">
    <text evidence="1">Homodimer.</text>
</comment>
<comment type="subcellular location">
    <subcellularLocation>
        <location evidence="1">Cytoplasm</location>
    </subcellularLocation>
</comment>
<comment type="similarity">
    <text evidence="1">Belongs to the acetokinase family.</text>
</comment>
<accession>B2VIP6</accession>
<sequence length="400" mass="43193">MSSKLVLVLNCGSSSLKFAIIDPANGDEYLSGLAECFHLPEARIKWKLDGAKQEAALGAGAAHSEALNFMVKTILAQKPELSAQIAAIGHRIVHGGEKLTHSVVIDESVIQGIKDASSFAPLHNPAHLIGIDEALKNFPHLSDKNVAVFDTAFHQTMPEESYLYALPYKLYKEHGVRRYGAHGTSHYYVTQEAAKALNKPVSELNIITCHLGNGGSVAAIRHGECVDTSMGLTPLEGLVMGTRSGDLDPAIIFFLHDTLGMNVGAINNMLTKESGLLGLTEVTSDCRYVEDNYDSKADAKRAMDVYCHRLAKYIGSYSAQMDGRLDAVIFTGGIGENSSMVRELTLNKLALLGIEVDAERNLAARFGKSGFINKEGTRPVLVLPTNEELVIAQDASRLTA</sequence>
<name>ACKA_ERWT9</name>
<reference key="1">
    <citation type="journal article" date="2008" name="Environ. Microbiol.">
        <title>The genome of Erwinia tasmaniensis strain Et1/99, a non-pathogenic bacterium in the genus Erwinia.</title>
        <authorList>
            <person name="Kube M."/>
            <person name="Migdoll A.M."/>
            <person name="Mueller I."/>
            <person name="Kuhl H."/>
            <person name="Beck A."/>
            <person name="Reinhardt R."/>
            <person name="Geider K."/>
        </authorList>
    </citation>
    <scope>NUCLEOTIDE SEQUENCE [LARGE SCALE GENOMIC DNA]</scope>
    <source>
        <strain>DSM 17950 / CFBP 7177 / CIP 109463 / NCPPB 4357 / Et1/99</strain>
    </source>
</reference>
<dbReference type="EC" id="2.7.2.1" evidence="1"/>
<dbReference type="EMBL" id="CU468135">
    <property type="protein sequence ID" value="CAO96240.1"/>
    <property type="molecule type" value="Genomic_DNA"/>
</dbReference>
<dbReference type="RefSeq" id="WP_012440937.1">
    <property type="nucleotide sequence ID" value="NC_010694.1"/>
</dbReference>
<dbReference type="SMR" id="B2VIP6"/>
<dbReference type="STRING" id="465817.ETA_11940"/>
<dbReference type="KEGG" id="eta:ETA_11940"/>
<dbReference type="eggNOG" id="COG0282">
    <property type="taxonomic scope" value="Bacteria"/>
</dbReference>
<dbReference type="HOGENOM" id="CLU_020352_0_1_6"/>
<dbReference type="OrthoDB" id="9802453at2"/>
<dbReference type="UniPathway" id="UPA00340">
    <property type="reaction ID" value="UER00458"/>
</dbReference>
<dbReference type="Proteomes" id="UP000001726">
    <property type="component" value="Chromosome"/>
</dbReference>
<dbReference type="GO" id="GO:0005829">
    <property type="term" value="C:cytosol"/>
    <property type="evidence" value="ECO:0007669"/>
    <property type="project" value="TreeGrafter"/>
</dbReference>
<dbReference type="GO" id="GO:0008776">
    <property type="term" value="F:acetate kinase activity"/>
    <property type="evidence" value="ECO:0007669"/>
    <property type="project" value="UniProtKB-UniRule"/>
</dbReference>
<dbReference type="GO" id="GO:0005524">
    <property type="term" value="F:ATP binding"/>
    <property type="evidence" value="ECO:0007669"/>
    <property type="project" value="UniProtKB-KW"/>
</dbReference>
<dbReference type="GO" id="GO:0000287">
    <property type="term" value="F:magnesium ion binding"/>
    <property type="evidence" value="ECO:0007669"/>
    <property type="project" value="UniProtKB-UniRule"/>
</dbReference>
<dbReference type="GO" id="GO:0006083">
    <property type="term" value="P:acetate metabolic process"/>
    <property type="evidence" value="ECO:0007669"/>
    <property type="project" value="TreeGrafter"/>
</dbReference>
<dbReference type="GO" id="GO:0006085">
    <property type="term" value="P:acetyl-CoA biosynthetic process"/>
    <property type="evidence" value="ECO:0007669"/>
    <property type="project" value="UniProtKB-UniRule"/>
</dbReference>
<dbReference type="CDD" id="cd24010">
    <property type="entry name" value="ASKHA_NBD_AcK_PK"/>
    <property type="match status" value="1"/>
</dbReference>
<dbReference type="FunFam" id="3.30.420.40:FF:000041">
    <property type="entry name" value="Acetate kinase"/>
    <property type="match status" value="1"/>
</dbReference>
<dbReference type="FunFam" id="3.30.420.40:FF:000042">
    <property type="entry name" value="Acetate kinase"/>
    <property type="match status" value="1"/>
</dbReference>
<dbReference type="Gene3D" id="3.30.420.40">
    <property type="match status" value="2"/>
</dbReference>
<dbReference type="HAMAP" id="MF_00020">
    <property type="entry name" value="Acetate_kinase"/>
    <property type="match status" value="1"/>
</dbReference>
<dbReference type="InterPro" id="IPR004372">
    <property type="entry name" value="Ac/propionate_kinase"/>
</dbReference>
<dbReference type="InterPro" id="IPR000890">
    <property type="entry name" value="Aliphatic_acid_kin_short-chain"/>
</dbReference>
<dbReference type="InterPro" id="IPR023865">
    <property type="entry name" value="Aliphatic_acid_kinase_CS"/>
</dbReference>
<dbReference type="InterPro" id="IPR043129">
    <property type="entry name" value="ATPase_NBD"/>
</dbReference>
<dbReference type="NCBIfam" id="TIGR00016">
    <property type="entry name" value="ackA"/>
    <property type="match status" value="1"/>
</dbReference>
<dbReference type="PANTHER" id="PTHR21060">
    <property type="entry name" value="ACETATE KINASE"/>
    <property type="match status" value="1"/>
</dbReference>
<dbReference type="PANTHER" id="PTHR21060:SF21">
    <property type="entry name" value="ACETATE KINASE"/>
    <property type="match status" value="1"/>
</dbReference>
<dbReference type="Pfam" id="PF00871">
    <property type="entry name" value="Acetate_kinase"/>
    <property type="match status" value="1"/>
</dbReference>
<dbReference type="PIRSF" id="PIRSF000722">
    <property type="entry name" value="Acetate_prop_kin"/>
    <property type="match status" value="1"/>
</dbReference>
<dbReference type="PRINTS" id="PR00471">
    <property type="entry name" value="ACETATEKNASE"/>
</dbReference>
<dbReference type="SUPFAM" id="SSF53067">
    <property type="entry name" value="Actin-like ATPase domain"/>
    <property type="match status" value="2"/>
</dbReference>
<dbReference type="PROSITE" id="PS01075">
    <property type="entry name" value="ACETATE_KINASE_1"/>
    <property type="match status" value="1"/>
</dbReference>
<dbReference type="PROSITE" id="PS01076">
    <property type="entry name" value="ACETATE_KINASE_2"/>
    <property type="match status" value="1"/>
</dbReference>
<protein>
    <recommendedName>
        <fullName evidence="1">Acetate kinase</fullName>
        <ecNumber evidence="1">2.7.2.1</ecNumber>
    </recommendedName>
    <alternativeName>
        <fullName evidence="1">Acetokinase</fullName>
    </alternativeName>
</protein>